<reference key="1">
    <citation type="journal article" date="2002" name="Mech. Dev.">
        <title>Expression of UNC-5 in the developing Xenopus visual system.</title>
        <authorList>
            <person name="Anderson R.B."/>
            <person name="Holt C.E."/>
        </authorList>
    </citation>
    <scope>NUCLEOTIDE SEQUENCE [MRNA]</scope>
    <scope>TISSUE SPECIFICITY</scope>
</reference>
<organism>
    <name type="scientific">Xenopus laevis</name>
    <name type="common">African clawed frog</name>
    <dbReference type="NCBI Taxonomy" id="8355"/>
    <lineage>
        <taxon>Eukaryota</taxon>
        <taxon>Metazoa</taxon>
        <taxon>Chordata</taxon>
        <taxon>Craniata</taxon>
        <taxon>Vertebrata</taxon>
        <taxon>Euteleostomi</taxon>
        <taxon>Amphibia</taxon>
        <taxon>Batrachia</taxon>
        <taxon>Anura</taxon>
        <taxon>Pipoidea</taxon>
        <taxon>Pipidae</taxon>
        <taxon>Xenopodinae</taxon>
        <taxon>Xenopus</taxon>
        <taxon>Xenopus</taxon>
    </lineage>
</organism>
<evidence type="ECO:0000250" key="1"/>
<evidence type="ECO:0000250" key="2">
    <source>
        <dbReference type="UniProtKB" id="C5IAW9"/>
    </source>
</evidence>
<evidence type="ECO:0000250" key="3">
    <source>
        <dbReference type="UniProtKB" id="O08722"/>
    </source>
</evidence>
<evidence type="ECO:0000250" key="4">
    <source>
        <dbReference type="UniProtKB" id="Q6ZN44"/>
    </source>
</evidence>
<evidence type="ECO:0000255" key="5"/>
<evidence type="ECO:0000255" key="6">
    <source>
        <dbReference type="PROSITE-ProRule" id="PRU00210"/>
    </source>
</evidence>
<evidence type="ECO:0000255" key="7">
    <source>
        <dbReference type="PROSITE-ProRule" id="PRU00485"/>
    </source>
</evidence>
<evidence type="ECO:0000269" key="8">
    <source>
    </source>
</evidence>
<evidence type="ECO:0000305" key="9"/>
<sequence length="943" mass="105084">MYLSRNPSGAALAAILVALILSCNFPSSTAGIEYSDVLPDSFPSAPAESLPHFLLEPEDAYIVKNKPVELVCKANPATQIYFKCNGEWVNQNDHITKERVDDVTGLVVREVQIEVSRQQVEELFGLEDYWCQCVAWSSAGTTKSKRSYVRIAYLRKNFDQEPLGKEVALEQEALLQCRPPEGVPPAEVEWLKNEEIIDPTKDTNFLITIDHNLIIKQARLSDTANYTCVSKNIVAKRRSTTATVIVFVNGGWSSWTEWSPCNNRCGHGWQKRTRTCTNPAPLNGGTMCEGQQYQKFACNTMCPVDGGWTEWSKWSACSTECTHWRSRECNAPTPKNGGKDCSGMLLDSKNCTDGLCMQNKRVLGETKSRLLESTGDVALYAGLVVAIFIVIILLMAVGIVVYRRNCREFDTDITDSSAALTGGFHPVNFKTSRHDNSQLIHPAMQPDLTANAGIYRGNMYALQDSADKIPMTNSPLLDPLPNLKIKVYNSSTVGSSPGIHDGNNLLGTKPTGTYPSDNNIMNARNKNMSMQHLLTLPRDSSNSVTGTFGSLGGRLTFPNTGVSLLIPQGAIPQGKYYEMYLMINKRENTVLPSEGTQTILSPIITCGPTGLLLCKPVILTVPHCADINTSDWILQLKTQSHQGNWEEVVTLNEETLNTPCYCQLESHSCHTLLDQLGTYAFVGESYSRSAIKRLQLAIFAPMLCTSLEYNLKVYCVEDTPDALKEVLELEKTLGGYLVEEPKLLMFKDSYHNLRLSIHDIPHSLWRSKLMAKYQEIPFYHIWSGSQRTLHCTFTLERYSLAATELTCKICVRQVEGEGQIFQLHTLLEENVKSFDPFCSQAENSVTTHLGPYAFKIPFSIRQKICNSLDAPNSRGNDWRLLAQKLCMDRYLNYFATKASPTGVILDLWEALHQDDGDLNTLASALEEMGKSEMMLVMATDGDC</sequence>
<comment type="function">
    <text evidence="2 3">Plays a role in cell-cell adhesion during embryonic development. Receptor for netrin required for axon guidance. Mediates axon repulsion of neuronal growth cones in the developing nervous system upon ligand binding (By similarity).</text>
</comment>
<comment type="subunit">
    <text evidence="2">Interacts (via extracellular domain) with flrt3 (via extracellular domain). Interacts with rnd1.</text>
</comment>
<comment type="subcellular location">
    <subcellularLocation>
        <location evidence="2">Cell membrane</location>
        <topology evidence="9">Single-pass type I membrane protein</topology>
    </subcellularLocation>
</comment>
<comment type="tissue specificity">
    <text evidence="8">In the developing visual system, it is expressed within the developing optic vesicles and later become restricted to the dorsal ciliary marginal zone, a site of retinoblast proliferation and differentiation.</text>
</comment>
<comment type="PTM">
    <text evidence="1">Phosphorylated on cytoplasmic tyrosine residues.</text>
</comment>
<comment type="similarity">
    <text evidence="9">Belongs to the unc-5 family.</text>
</comment>
<gene>
    <name type="primary">unc5b-a</name>
</gene>
<protein>
    <recommendedName>
        <fullName>Netrin receptor UNC5B-a</fullName>
    </recommendedName>
    <alternativeName>
        <fullName>Protein Xunc-5</fullName>
    </alternativeName>
    <alternativeName>
        <fullName>Protein unc-5 homolog-a</fullName>
    </alternativeName>
</protein>
<feature type="signal peptide" evidence="5">
    <location>
        <begin position="1"/>
        <end position="30"/>
    </location>
</feature>
<feature type="chain" id="PRO_0000036074" description="Netrin receptor UNC5B-a">
    <location>
        <begin position="31"/>
        <end position="943"/>
    </location>
</feature>
<feature type="topological domain" description="Extracellular" evidence="5">
    <location>
        <begin position="31"/>
        <end position="380"/>
    </location>
</feature>
<feature type="transmembrane region" description="Helical" evidence="5">
    <location>
        <begin position="381"/>
        <end position="401"/>
    </location>
</feature>
<feature type="topological domain" description="Cytoplasmic" evidence="5">
    <location>
        <begin position="402"/>
        <end position="943"/>
    </location>
</feature>
<feature type="domain" description="Ig-like">
    <location>
        <begin position="51"/>
        <end position="148"/>
    </location>
</feature>
<feature type="domain" description="Ig-like C2-type">
    <location>
        <begin position="150"/>
        <end position="245"/>
    </location>
</feature>
<feature type="domain" description="TSP type-1 1" evidence="6">
    <location>
        <begin position="249"/>
        <end position="303"/>
    </location>
</feature>
<feature type="domain" description="TSP type-1 2" evidence="6">
    <location>
        <begin position="305"/>
        <end position="357"/>
    </location>
</feature>
<feature type="domain" description="ZU5" evidence="7">
    <location>
        <begin position="542"/>
        <end position="685"/>
    </location>
</feature>
<feature type="domain" description="Death">
    <location>
        <begin position="863"/>
        <end position="941"/>
    </location>
</feature>
<feature type="region of interest" description="UPA domain" evidence="1">
    <location>
        <begin position="688"/>
        <end position="836"/>
    </location>
</feature>
<feature type="glycosylation site" description="N-linked (GlcNAc...) asparagine" evidence="5">
    <location>
        <position position="225"/>
    </location>
</feature>
<feature type="glycosylation site" description="N-linked (GlcNAc...) asparagine" evidence="5">
    <location>
        <position position="350"/>
    </location>
</feature>
<feature type="disulfide bond" evidence="4">
    <location>
        <begin position="72"/>
        <end position="133"/>
    </location>
</feature>
<feature type="disulfide bond" evidence="4">
    <location>
        <begin position="84"/>
        <end position="131"/>
    </location>
</feature>
<feature type="disulfide bond" evidence="4">
    <location>
        <begin position="177"/>
        <end position="228"/>
    </location>
</feature>
<feature type="disulfide bond" evidence="1">
    <location>
        <begin position="261"/>
        <end position="298"/>
    </location>
</feature>
<feature type="disulfide bond" evidence="1">
    <location>
        <begin position="265"/>
        <end position="302"/>
    </location>
</feature>
<feature type="disulfide bond" evidence="1">
    <location>
        <begin position="276"/>
        <end position="288"/>
    </location>
</feature>
<feature type="disulfide bond" evidence="4">
    <location>
        <begin position="317"/>
        <end position="351"/>
    </location>
</feature>
<feature type="disulfide bond" evidence="4">
    <location>
        <begin position="321"/>
        <end position="356"/>
    </location>
</feature>
<feature type="disulfide bond" evidence="4">
    <location>
        <begin position="329"/>
        <end position="341"/>
    </location>
</feature>
<proteinExistence type="evidence at transcript level"/>
<name>UN5BA_XENLA</name>
<accession>Q8JGT4</accession>
<keyword id="KW-1003">Cell membrane</keyword>
<keyword id="KW-0217">Developmental protein</keyword>
<keyword id="KW-1015">Disulfide bond</keyword>
<keyword id="KW-0325">Glycoprotein</keyword>
<keyword id="KW-0393">Immunoglobulin domain</keyword>
<keyword id="KW-0472">Membrane</keyword>
<keyword id="KW-0675">Receptor</keyword>
<keyword id="KW-1185">Reference proteome</keyword>
<keyword id="KW-0677">Repeat</keyword>
<keyword id="KW-0732">Signal</keyword>
<keyword id="KW-0812">Transmembrane</keyword>
<keyword id="KW-1133">Transmembrane helix</keyword>
<dbReference type="EMBL" id="AY099459">
    <property type="protein sequence ID" value="AAM34486.1"/>
    <property type="molecule type" value="mRNA"/>
</dbReference>
<dbReference type="RefSeq" id="NP_001082302.1">
    <property type="nucleotide sequence ID" value="NM_001088833.1"/>
</dbReference>
<dbReference type="SMR" id="Q8JGT4"/>
<dbReference type="GlyCosmos" id="Q8JGT4">
    <property type="glycosylation" value="2 sites, No reported glycans"/>
</dbReference>
<dbReference type="GeneID" id="398393"/>
<dbReference type="KEGG" id="xla:398393"/>
<dbReference type="AGR" id="Xenbase:XB-GENE-6046969"/>
<dbReference type="CTD" id="398393"/>
<dbReference type="Xenbase" id="XB-GENE-6046969">
    <property type="gene designation" value="unc5b.L"/>
</dbReference>
<dbReference type="OrthoDB" id="5973910at2759"/>
<dbReference type="Proteomes" id="UP000186698">
    <property type="component" value="Chromosome 7L"/>
</dbReference>
<dbReference type="Bgee" id="398393">
    <property type="expression patterns" value="Expressed in egg cell and 11 other cell types or tissues"/>
</dbReference>
<dbReference type="GO" id="GO:0005886">
    <property type="term" value="C:plasma membrane"/>
    <property type="evidence" value="ECO:0007669"/>
    <property type="project" value="UniProtKB-SubCell"/>
</dbReference>
<dbReference type="GO" id="GO:0005042">
    <property type="term" value="F:netrin receptor activity"/>
    <property type="evidence" value="ECO:0000318"/>
    <property type="project" value="GO_Central"/>
</dbReference>
<dbReference type="GO" id="GO:0033564">
    <property type="term" value="P:anterior/posterior axon guidance"/>
    <property type="evidence" value="ECO:0000318"/>
    <property type="project" value="GO_Central"/>
</dbReference>
<dbReference type="CDD" id="cd08802">
    <property type="entry name" value="Death_UNC5B"/>
    <property type="match status" value="1"/>
</dbReference>
<dbReference type="FunFam" id="1.10.533.10:FF:000001">
    <property type="entry name" value="Unc-5 netrin receptor B"/>
    <property type="match status" value="1"/>
</dbReference>
<dbReference type="FunFam" id="2.20.100.10:FF:000002">
    <property type="entry name" value="Unc-5 netrin receptor C"/>
    <property type="match status" value="1"/>
</dbReference>
<dbReference type="FunFam" id="2.20.100.10:FF:000008">
    <property type="entry name" value="Unc-5 netrin receptor C"/>
    <property type="match status" value="1"/>
</dbReference>
<dbReference type="FunFam" id="2.60.220.30:FF:000003">
    <property type="entry name" value="Unc-5 netrin receptor C"/>
    <property type="match status" value="1"/>
</dbReference>
<dbReference type="FunFam" id="2.60.40.10:FF:000037">
    <property type="entry name" value="Unc-5 netrin receptor C"/>
    <property type="match status" value="1"/>
</dbReference>
<dbReference type="FunFam" id="2.60.40.10:FF:000039">
    <property type="entry name" value="Unc-5 netrin receptor C"/>
    <property type="match status" value="1"/>
</dbReference>
<dbReference type="Gene3D" id="2.60.220.30">
    <property type="match status" value="1"/>
</dbReference>
<dbReference type="Gene3D" id="1.10.533.10">
    <property type="entry name" value="Death Domain, Fas"/>
    <property type="match status" value="1"/>
</dbReference>
<dbReference type="Gene3D" id="2.60.40.10">
    <property type="entry name" value="Immunoglobulins"/>
    <property type="match status" value="2"/>
</dbReference>
<dbReference type="Gene3D" id="2.20.100.10">
    <property type="entry name" value="Thrombospondin type-1 (TSP1) repeat"/>
    <property type="match status" value="2"/>
</dbReference>
<dbReference type="InterPro" id="IPR011029">
    <property type="entry name" value="DEATH-like_dom_sf"/>
</dbReference>
<dbReference type="InterPro" id="IPR000488">
    <property type="entry name" value="Death_dom"/>
</dbReference>
<dbReference type="InterPro" id="IPR042156">
    <property type="entry name" value="Death_UNC5B"/>
</dbReference>
<dbReference type="InterPro" id="IPR007110">
    <property type="entry name" value="Ig-like_dom"/>
</dbReference>
<dbReference type="InterPro" id="IPR036179">
    <property type="entry name" value="Ig-like_dom_sf"/>
</dbReference>
<dbReference type="InterPro" id="IPR013783">
    <property type="entry name" value="Ig-like_fold"/>
</dbReference>
<dbReference type="InterPro" id="IPR013098">
    <property type="entry name" value="Ig_I-set"/>
</dbReference>
<dbReference type="InterPro" id="IPR003599">
    <property type="entry name" value="Ig_sub"/>
</dbReference>
<dbReference type="InterPro" id="IPR003598">
    <property type="entry name" value="Ig_sub2"/>
</dbReference>
<dbReference type="InterPro" id="IPR000884">
    <property type="entry name" value="TSP1_rpt"/>
</dbReference>
<dbReference type="InterPro" id="IPR036383">
    <property type="entry name" value="TSP1_rpt_sf"/>
</dbReference>
<dbReference type="InterPro" id="IPR037936">
    <property type="entry name" value="UNC5"/>
</dbReference>
<dbReference type="InterPro" id="IPR033772">
    <property type="entry name" value="UPA"/>
</dbReference>
<dbReference type="InterPro" id="IPR000906">
    <property type="entry name" value="ZU5_dom"/>
</dbReference>
<dbReference type="PANTHER" id="PTHR12582">
    <property type="entry name" value="NETRIN RECEPTOR UNC5"/>
    <property type="match status" value="1"/>
</dbReference>
<dbReference type="PANTHER" id="PTHR12582:SF6">
    <property type="entry name" value="NETRIN RECEPTOR UNC5B"/>
    <property type="match status" value="1"/>
</dbReference>
<dbReference type="Pfam" id="PF00531">
    <property type="entry name" value="Death"/>
    <property type="match status" value="1"/>
</dbReference>
<dbReference type="Pfam" id="PF07679">
    <property type="entry name" value="I-set"/>
    <property type="match status" value="1"/>
</dbReference>
<dbReference type="Pfam" id="PF00090">
    <property type="entry name" value="TSP_1"/>
    <property type="match status" value="2"/>
</dbReference>
<dbReference type="Pfam" id="PF17217">
    <property type="entry name" value="UPA"/>
    <property type="match status" value="1"/>
</dbReference>
<dbReference type="Pfam" id="PF00791">
    <property type="entry name" value="ZU5"/>
    <property type="match status" value="1"/>
</dbReference>
<dbReference type="PRINTS" id="PR01705">
    <property type="entry name" value="TSP1REPEAT"/>
</dbReference>
<dbReference type="SMART" id="SM00005">
    <property type="entry name" value="DEATH"/>
    <property type="match status" value="1"/>
</dbReference>
<dbReference type="SMART" id="SM00409">
    <property type="entry name" value="IG"/>
    <property type="match status" value="2"/>
</dbReference>
<dbReference type="SMART" id="SM00408">
    <property type="entry name" value="IGc2"/>
    <property type="match status" value="1"/>
</dbReference>
<dbReference type="SMART" id="SM00209">
    <property type="entry name" value="TSP1"/>
    <property type="match status" value="2"/>
</dbReference>
<dbReference type="SMART" id="SM00218">
    <property type="entry name" value="ZU5"/>
    <property type="match status" value="1"/>
</dbReference>
<dbReference type="SUPFAM" id="SSF47986">
    <property type="entry name" value="DEATH domain"/>
    <property type="match status" value="1"/>
</dbReference>
<dbReference type="SUPFAM" id="SSF48726">
    <property type="entry name" value="Immunoglobulin"/>
    <property type="match status" value="2"/>
</dbReference>
<dbReference type="SUPFAM" id="SSF82895">
    <property type="entry name" value="TSP-1 type 1 repeat"/>
    <property type="match status" value="2"/>
</dbReference>
<dbReference type="PROSITE" id="PS50835">
    <property type="entry name" value="IG_LIKE"/>
    <property type="match status" value="1"/>
</dbReference>
<dbReference type="PROSITE" id="PS50092">
    <property type="entry name" value="TSP1"/>
    <property type="match status" value="2"/>
</dbReference>
<dbReference type="PROSITE" id="PS51145">
    <property type="entry name" value="ZU5"/>
    <property type="match status" value="1"/>
</dbReference>